<reference key="1">
    <citation type="journal article" date="2009" name="J. Bacteriol.">
        <title>Complete genome sequence and comparative genome analysis of enteropathogenic Escherichia coli O127:H6 strain E2348/69.</title>
        <authorList>
            <person name="Iguchi A."/>
            <person name="Thomson N.R."/>
            <person name="Ogura Y."/>
            <person name="Saunders D."/>
            <person name="Ooka T."/>
            <person name="Henderson I.R."/>
            <person name="Harris D."/>
            <person name="Asadulghani M."/>
            <person name="Kurokawa K."/>
            <person name="Dean P."/>
            <person name="Kenny B."/>
            <person name="Quail M.A."/>
            <person name="Thurston S."/>
            <person name="Dougan G."/>
            <person name="Hayashi T."/>
            <person name="Parkhill J."/>
            <person name="Frankel G."/>
        </authorList>
    </citation>
    <scope>NUCLEOTIDE SEQUENCE [LARGE SCALE GENOMIC DNA]</scope>
    <source>
        <strain>E2348/69 / EPEC</strain>
    </source>
</reference>
<sequence>MQLTSFTDYGLRALIYMASLPEGRMTSISEVTDVYGVSRNHMVKIINQLSRAGYVTAVRGKNGGIRLGKPASAIRIGDVVRELEPLSLVNCSSEFCHITPACRLKQALSKAVQSFLTELDNYTLADLVEENQPLYKLLLVE</sequence>
<accession>B7UQI7</accession>
<organism>
    <name type="scientific">Escherichia coli O127:H6 (strain E2348/69 / EPEC)</name>
    <dbReference type="NCBI Taxonomy" id="574521"/>
    <lineage>
        <taxon>Bacteria</taxon>
        <taxon>Pseudomonadati</taxon>
        <taxon>Pseudomonadota</taxon>
        <taxon>Gammaproteobacteria</taxon>
        <taxon>Enterobacterales</taxon>
        <taxon>Enterobacteriaceae</taxon>
        <taxon>Escherichia</taxon>
    </lineage>
</organism>
<gene>
    <name evidence="1" type="primary">nsrR</name>
    <name type="ordered locus">E2348C_4501</name>
</gene>
<dbReference type="EMBL" id="FM180568">
    <property type="protein sequence ID" value="CAS12049.1"/>
    <property type="molecule type" value="Genomic_DNA"/>
</dbReference>
<dbReference type="RefSeq" id="WP_001177639.1">
    <property type="nucleotide sequence ID" value="NC_011601.1"/>
</dbReference>
<dbReference type="SMR" id="B7UQI7"/>
<dbReference type="GeneID" id="93777643"/>
<dbReference type="KEGG" id="ecg:E2348C_4501"/>
<dbReference type="HOGENOM" id="CLU_107144_2_1_6"/>
<dbReference type="Proteomes" id="UP000008205">
    <property type="component" value="Chromosome"/>
</dbReference>
<dbReference type="GO" id="GO:0005829">
    <property type="term" value="C:cytosol"/>
    <property type="evidence" value="ECO:0007669"/>
    <property type="project" value="TreeGrafter"/>
</dbReference>
<dbReference type="GO" id="GO:0051537">
    <property type="term" value="F:2 iron, 2 sulfur cluster binding"/>
    <property type="evidence" value="ECO:0007669"/>
    <property type="project" value="UniProtKB-KW"/>
</dbReference>
<dbReference type="GO" id="GO:0003700">
    <property type="term" value="F:DNA-binding transcription factor activity"/>
    <property type="evidence" value="ECO:0007669"/>
    <property type="project" value="UniProtKB-UniRule"/>
</dbReference>
<dbReference type="GO" id="GO:0003690">
    <property type="term" value="F:double-stranded DNA binding"/>
    <property type="evidence" value="ECO:0007669"/>
    <property type="project" value="UniProtKB-UniRule"/>
</dbReference>
<dbReference type="GO" id="GO:0005506">
    <property type="term" value="F:iron ion binding"/>
    <property type="evidence" value="ECO:0007669"/>
    <property type="project" value="UniProtKB-UniRule"/>
</dbReference>
<dbReference type="GO" id="GO:0045892">
    <property type="term" value="P:negative regulation of DNA-templated transcription"/>
    <property type="evidence" value="ECO:0007669"/>
    <property type="project" value="InterPro"/>
</dbReference>
<dbReference type="FunFam" id="1.10.10.10:FF:000105">
    <property type="entry name" value="HTH-type transcriptional repressor NsrR"/>
    <property type="match status" value="1"/>
</dbReference>
<dbReference type="Gene3D" id="1.10.10.10">
    <property type="entry name" value="Winged helix-like DNA-binding domain superfamily/Winged helix DNA-binding domain"/>
    <property type="match status" value="1"/>
</dbReference>
<dbReference type="HAMAP" id="MF_01177">
    <property type="entry name" value="HTH_type_NsrR"/>
    <property type="match status" value="1"/>
</dbReference>
<dbReference type="InterPro" id="IPR030489">
    <property type="entry name" value="TR_Rrf2-type_CS"/>
</dbReference>
<dbReference type="InterPro" id="IPR000944">
    <property type="entry name" value="Tscrpt_reg_Rrf2"/>
</dbReference>
<dbReference type="InterPro" id="IPR023761">
    <property type="entry name" value="Tscrpt_rep_HTH_NsrR"/>
</dbReference>
<dbReference type="InterPro" id="IPR036388">
    <property type="entry name" value="WH-like_DNA-bd_sf"/>
</dbReference>
<dbReference type="InterPro" id="IPR036390">
    <property type="entry name" value="WH_DNA-bd_sf"/>
</dbReference>
<dbReference type="NCBIfam" id="NF008240">
    <property type="entry name" value="PRK11014.1"/>
    <property type="match status" value="1"/>
</dbReference>
<dbReference type="NCBIfam" id="TIGR00738">
    <property type="entry name" value="rrf2_super"/>
    <property type="match status" value="1"/>
</dbReference>
<dbReference type="PANTHER" id="PTHR33221:SF4">
    <property type="entry name" value="HTH-TYPE TRANSCRIPTIONAL REPRESSOR NSRR"/>
    <property type="match status" value="1"/>
</dbReference>
<dbReference type="PANTHER" id="PTHR33221">
    <property type="entry name" value="WINGED HELIX-TURN-HELIX TRANSCRIPTIONAL REGULATOR, RRF2 FAMILY"/>
    <property type="match status" value="1"/>
</dbReference>
<dbReference type="Pfam" id="PF02082">
    <property type="entry name" value="Rrf2"/>
    <property type="match status" value="1"/>
</dbReference>
<dbReference type="SUPFAM" id="SSF46785">
    <property type="entry name" value="Winged helix' DNA-binding domain"/>
    <property type="match status" value="1"/>
</dbReference>
<dbReference type="PROSITE" id="PS01332">
    <property type="entry name" value="HTH_RRF2_1"/>
    <property type="match status" value="1"/>
</dbReference>
<dbReference type="PROSITE" id="PS51197">
    <property type="entry name" value="HTH_RRF2_2"/>
    <property type="match status" value="1"/>
</dbReference>
<keyword id="KW-0001">2Fe-2S</keyword>
<keyword id="KW-0238">DNA-binding</keyword>
<keyword id="KW-0408">Iron</keyword>
<keyword id="KW-0411">Iron-sulfur</keyword>
<keyword id="KW-0479">Metal-binding</keyword>
<keyword id="KW-1185">Reference proteome</keyword>
<keyword id="KW-0678">Repressor</keyword>
<keyword id="KW-0804">Transcription</keyword>
<keyword id="KW-0805">Transcription regulation</keyword>
<comment type="function">
    <text evidence="1">Nitric oxide-sensitive repressor of genes involved in protecting the cell against nitrosative stress. May require iron for activity.</text>
</comment>
<comment type="cofactor">
    <cofactor evidence="1">
        <name>[2Fe-2S] cluster</name>
        <dbReference type="ChEBI" id="CHEBI:190135"/>
    </cofactor>
    <text evidence="1">Binds 1 [2Fe-2S] cluster per subunit.</text>
</comment>
<proteinExistence type="inferred from homology"/>
<evidence type="ECO:0000255" key="1">
    <source>
        <dbReference type="HAMAP-Rule" id="MF_01177"/>
    </source>
</evidence>
<protein>
    <recommendedName>
        <fullName evidence="1">HTH-type transcriptional repressor NsrR</fullName>
    </recommendedName>
</protein>
<name>NSRR_ECO27</name>
<feature type="chain" id="PRO_1000164420" description="HTH-type transcriptional repressor NsrR">
    <location>
        <begin position="1"/>
        <end position="141"/>
    </location>
</feature>
<feature type="domain" description="HTH rrf2-type" evidence="1">
    <location>
        <begin position="2"/>
        <end position="129"/>
    </location>
</feature>
<feature type="DNA-binding region" description="H-T-H motif" evidence="1">
    <location>
        <begin position="28"/>
        <end position="51"/>
    </location>
</feature>
<feature type="binding site" evidence="1">
    <location>
        <position position="91"/>
    </location>
    <ligand>
        <name>[2Fe-2S] cluster</name>
        <dbReference type="ChEBI" id="CHEBI:190135"/>
    </ligand>
</feature>
<feature type="binding site" evidence="1">
    <location>
        <position position="96"/>
    </location>
    <ligand>
        <name>[2Fe-2S] cluster</name>
        <dbReference type="ChEBI" id="CHEBI:190135"/>
    </ligand>
</feature>
<feature type="binding site" evidence="1">
    <location>
        <position position="102"/>
    </location>
    <ligand>
        <name>[2Fe-2S] cluster</name>
        <dbReference type="ChEBI" id="CHEBI:190135"/>
    </ligand>
</feature>